<protein>
    <recommendedName>
        <fullName>Lipooligosaccharide biosynthesis protein lic2B</fullName>
        <ecNumber>2.-.-.-</ecNumber>
    </recommendedName>
</protein>
<proteinExistence type="inferred from homology"/>
<organism>
    <name type="scientific">Haemophilus influenzae</name>
    <dbReference type="NCBI Taxonomy" id="727"/>
    <lineage>
        <taxon>Bacteria</taxon>
        <taxon>Pseudomonadati</taxon>
        <taxon>Pseudomonadota</taxon>
        <taxon>Gammaproteobacteria</taxon>
        <taxon>Pasteurellales</taxon>
        <taxon>Pasteurellaceae</taxon>
        <taxon>Haemophilus</taxon>
    </lineage>
</organism>
<reference key="1">
    <citation type="journal article" date="1996" name="Mol. Microbiol.">
        <title>Tandem repeats of the tetramer 5'-CAAT-3' present in lic2A are required for phase variation but not lipopolysaccharide biosynthesis in Haemophilus influenzae.</title>
        <authorList>
            <person name="High N.J."/>
            <person name="Jennings M.P."/>
            <person name="Moxon E.R."/>
        </authorList>
    </citation>
    <scope>NUCLEOTIDE SEQUENCE [GENOMIC DNA]</scope>
    <scope>INVOLVEMENT IN LIPOOLIGOSACCHARIDE SYNTHESIS</scope>
    <source>
        <strain>RM 7004 / Serotype B</strain>
    </source>
</reference>
<sequence length="266" mass="31131">MHINYVISLTSAYQRREHIQKEFSQQNIPFEFFDALKPSKELTSLIEKFIPNLLHAKLTEGEKACFMSHYMLWQKCFSEDLPYIYIFEDDVLLGENADKFLAEDEWLEEAFKQTDKFILRFETFLNFSKCKDKKIKPYSGRKILKLVSENCGAAGYVISREAVKQLSAHICSLTSNHLLAIDLLMFNIFNQSTYQVSPGVCVQEGQLYPKDIKLHSQLETERQKYLSVKKKRTLKTVLISLAGKPKKILRKIYRKLFISKHIVPFR</sequence>
<gene>
    <name type="primary">lic2B</name>
</gene>
<evidence type="ECO:0000250" key="1"/>
<evidence type="ECO:0000305" key="2"/>
<name>LIC2B_HAEIF</name>
<keyword id="KW-0328">Glycosyltransferase</keyword>
<keyword id="KW-0808">Transferase</keyword>
<keyword id="KW-0843">Virulence</keyword>
<accession>Q57394</accession>
<comment type="function">
    <text evidence="1">Involved in extracellular lipooligosaccharide (LOS) biosynthesis and virulence expression. Involved in the synthesis of the oligosaccharide moiety of the LOS molecule by adding GalNAc (By similarity).</text>
</comment>
<comment type="similarity">
    <text evidence="2">Belongs to the glycosyltransferase 25 family.</text>
</comment>
<feature type="chain" id="PRO_0000216234" description="Lipooligosaccharide biosynthesis protein lic2B">
    <location>
        <begin position="1"/>
        <end position="266"/>
    </location>
</feature>
<dbReference type="EC" id="2.-.-.-"/>
<dbReference type="EMBL" id="Z54182">
    <property type="protein sequence ID" value="CAA90892.1"/>
    <property type="molecule type" value="Genomic_DNA"/>
</dbReference>
<dbReference type="EMBL" id="U36398">
    <property type="protein sequence ID" value="AAA84947.1"/>
    <property type="molecule type" value="Genomic_DNA"/>
</dbReference>
<dbReference type="PIR" id="S71025">
    <property type="entry name" value="S71025"/>
</dbReference>
<dbReference type="SMR" id="Q57394"/>
<dbReference type="CAZy" id="GT25">
    <property type="family name" value="Glycosyltransferase Family 25"/>
</dbReference>
<dbReference type="GO" id="GO:0016757">
    <property type="term" value="F:glycosyltransferase activity"/>
    <property type="evidence" value="ECO:0000315"/>
    <property type="project" value="CACAO"/>
</dbReference>
<dbReference type="CDD" id="cd06532">
    <property type="entry name" value="Glyco_transf_25"/>
    <property type="match status" value="1"/>
</dbReference>
<dbReference type="InterPro" id="IPR002654">
    <property type="entry name" value="Glyco_trans_25"/>
</dbReference>
<dbReference type="Pfam" id="PF01755">
    <property type="entry name" value="Glyco_transf_25"/>
    <property type="match status" value="1"/>
</dbReference>